<proteinExistence type="inferred from homology"/>
<organism>
    <name type="scientific">Emericella nidulans (strain FGSC A4 / ATCC 38163 / CBS 112.46 / NRRL 194 / M139)</name>
    <name type="common">Aspergillus nidulans</name>
    <dbReference type="NCBI Taxonomy" id="227321"/>
    <lineage>
        <taxon>Eukaryota</taxon>
        <taxon>Fungi</taxon>
        <taxon>Dikarya</taxon>
        <taxon>Ascomycota</taxon>
        <taxon>Pezizomycotina</taxon>
        <taxon>Eurotiomycetes</taxon>
        <taxon>Eurotiomycetidae</taxon>
        <taxon>Eurotiales</taxon>
        <taxon>Aspergillaceae</taxon>
        <taxon>Aspergillus</taxon>
        <taxon>Aspergillus subgen. Nidulantes</taxon>
    </lineage>
</organism>
<keyword id="KW-0963">Cytoplasm</keyword>
<keyword id="KW-0539">Nucleus</keyword>
<keyword id="KW-1185">Reference proteome</keyword>
<keyword id="KW-0694">RNA-binding</keyword>
<keyword id="KW-0813">Transport</keyword>
<keyword id="KW-0819">tRNA processing</keyword>
<keyword id="KW-0820">tRNA-binding</keyword>
<accession>Q5ASE3</accession>
<accession>C8V9Q1</accession>
<accession>Q2LD02</accession>
<evidence type="ECO:0000250" key="1"/>
<evidence type="ECO:0000305" key="2"/>
<gene>
    <name type="primary">los1</name>
    <name type="synonym">kapM</name>
    <name type="ORF">AN8787</name>
</gene>
<sequence length="1031" mass="114948">MEEQVANAIEIAGNPTSDSTLKAQAFDYLNQLRTDPSGWQVCLSLFTKDPPQSHFIRHVSLEVVNSAAQAGLIDLRSLGFVRDRLLAYLRQVYGREGSNPDPPNIQNKIAQTITFLFSALYGNGWESFFDDLLSLTHKSPSSTTRDNPLGIIFYLRVINSIHDEIGDVLVSRSRAEQERANALKDLIRVRDMQKIASSWQEILSQWMDGDDLIVEMSLKAVGSWVSWIDIGLVVNQTMLDLLFQQLGRAQKAELREGEDKVRDAAVDVFTEIIGKKMKAEDKIDMIAFLNLDNVVGQISSSPPLYANRFTSKYDTDLAETVAKLVNTTVTDIVRALEQETVSAQCKEKANGLLQVFLPHILRYFSDEYDEVCSTVIPCVSDLLSYLRKMAKSNPSIASQHSSILLPILKAIIQKMRYDETASWGDDDDQTDEAEFQELRKRLGTLQQIVAAVDERLYMEAVSEVVATTFENMRQSGAQLDWRDLDLALHEMYLFGDSATKSGSLYNKGQPSGPSAERLVEMMLRMVESDIRSFTHPATQLQYMEICVRYSSFFHTHTHLIPGVLESFLQLAHHPMKKVKTRAWYLFQRLVKQLRAYIDNVAQTVVEALGDLLVIQAELPSESSDGDEMSSEDHEGSTDAVFNSQLYLFEAVGIICSIPTIPADKQVLYAQSVLSPVFVDMEKNLGSAKSGDARAVLQIHHDIMALGTLARGFSDWQPGTSSPATQLPAPEVSEAFSQVSEATLVALESLKASFDIRTASRFAFSRLIGVLGSRILPQLPRWIDGLLTQTSSRDEMALFLRLLDQVIFGFKGEIYNILDALLMPFLQRVFSGIADPTSGTDDEIHLAELKREYLNFLLAVLNNDLGAVIISERNQPMFDTVITTIEHFAKDAEDFTTAKMAFSVLSRMGSAWGGPDIAPAASNGPSTSQVALPGFGQFMITRFSPLCWALPATPSFNAKDAQAKQVLAEAGGLQRTIYSKMGMEYIEYLRDRELPGMGMGADLVEEYVGTLSRLDLRGFRQFFPQFIQRLSA</sequence>
<protein>
    <recommendedName>
        <fullName>Exportin-T</fullName>
    </recommendedName>
    <alternativeName>
        <fullName>Exportin(tRNA)</fullName>
    </alternativeName>
    <alternativeName>
        <fullName>Karyopherin-beta</fullName>
    </alternativeName>
    <alternativeName>
        <fullName>tRNA exportin</fullName>
    </alternativeName>
</protein>
<feature type="chain" id="PRO_0000343093" description="Exportin-T">
    <location>
        <begin position="1"/>
        <end position="1031"/>
    </location>
</feature>
<name>XPOT_EMENI</name>
<comment type="function">
    <text evidence="1">tRNA nucleus export receptor which facilitates tRNA translocation across the nuclear pore complex. Involved in pre-tRNA splicing, probably by affecting the interaction of pre-tRNA with splicing endonuclease (By similarity).</text>
</comment>
<comment type="subcellular location">
    <subcellularLocation>
        <location evidence="1">Nucleus</location>
    </subcellularLocation>
    <subcellularLocation>
        <location evidence="1">Cytoplasm</location>
    </subcellularLocation>
    <text evidence="1">Shuttles between the nucleus and the cytoplasm.</text>
</comment>
<comment type="similarity">
    <text evidence="2">Belongs to the exportin family.</text>
</comment>
<reference key="1">
    <citation type="submission" date="2005-12" db="EMBL/GenBank/DDBJ databases">
        <authorList>
            <person name="Paz L."/>
            <person name="Fernandez-Martinez J."/>
            <person name="Espeso E.A."/>
        </authorList>
    </citation>
    <scope>NUCLEOTIDE SEQUENCE [GENOMIC DNA]</scope>
</reference>
<reference key="2">
    <citation type="journal article" date="2005" name="Nature">
        <title>Sequencing of Aspergillus nidulans and comparative analysis with A. fumigatus and A. oryzae.</title>
        <authorList>
            <person name="Galagan J.E."/>
            <person name="Calvo S.E."/>
            <person name="Cuomo C."/>
            <person name="Ma L.-J."/>
            <person name="Wortman J.R."/>
            <person name="Batzoglou S."/>
            <person name="Lee S.-I."/>
            <person name="Bastuerkmen M."/>
            <person name="Spevak C.C."/>
            <person name="Clutterbuck J."/>
            <person name="Kapitonov V."/>
            <person name="Jurka J."/>
            <person name="Scazzocchio C."/>
            <person name="Farman M.L."/>
            <person name="Butler J."/>
            <person name="Purcell S."/>
            <person name="Harris S."/>
            <person name="Braus G.H."/>
            <person name="Draht O."/>
            <person name="Busch S."/>
            <person name="D'Enfert C."/>
            <person name="Bouchier C."/>
            <person name="Goldman G.H."/>
            <person name="Bell-Pedersen D."/>
            <person name="Griffiths-Jones S."/>
            <person name="Doonan J.H."/>
            <person name="Yu J."/>
            <person name="Vienken K."/>
            <person name="Pain A."/>
            <person name="Freitag M."/>
            <person name="Selker E.U."/>
            <person name="Archer D.B."/>
            <person name="Penalva M.A."/>
            <person name="Oakley B.R."/>
            <person name="Momany M."/>
            <person name="Tanaka T."/>
            <person name="Kumagai T."/>
            <person name="Asai K."/>
            <person name="Machida M."/>
            <person name="Nierman W.C."/>
            <person name="Denning D.W."/>
            <person name="Caddick M.X."/>
            <person name="Hynes M."/>
            <person name="Paoletti M."/>
            <person name="Fischer R."/>
            <person name="Miller B.L."/>
            <person name="Dyer P.S."/>
            <person name="Sachs M.S."/>
            <person name="Osmani S.A."/>
            <person name="Birren B.W."/>
        </authorList>
    </citation>
    <scope>NUCLEOTIDE SEQUENCE [LARGE SCALE GENOMIC DNA]</scope>
    <source>
        <strain>FGSC A4 / ATCC 38163 / CBS 112.46 / NRRL 194 / M139</strain>
    </source>
</reference>
<reference key="3">
    <citation type="journal article" date="2009" name="Fungal Genet. Biol.">
        <title>The 2008 update of the Aspergillus nidulans genome annotation: a community effort.</title>
        <authorList>
            <person name="Wortman J.R."/>
            <person name="Gilsenan J.M."/>
            <person name="Joardar V."/>
            <person name="Deegan J."/>
            <person name="Clutterbuck J."/>
            <person name="Andersen M.R."/>
            <person name="Archer D."/>
            <person name="Bencina M."/>
            <person name="Braus G."/>
            <person name="Coutinho P."/>
            <person name="von Dohren H."/>
            <person name="Doonan J."/>
            <person name="Driessen A.J."/>
            <person name="Durek P."/>
            <person name="Espeso E."/>
            <person name="Fekete E."/>
            <person name="Flipphi M."/>
            <person name="Estrada C.G."/>
            <person name="Geysens S."/>
            <person name="Goldman G."/>
            <person name="de Groot P.W."/>
            <person name="Hansen K."/>
            <person name="Harris S.D."/>
            <person name="Heinekamp T."/>
            <person name="Helmstaedt K."/>
            <person name="Henrissat B."/>
            <person name="Hofmann G."/>
            <person name="Homan T."/>
            <person name="Horio T."/>
            <person name="Horiuchi H."/>
            <person name="James S."/>
            <person name="Jones M."/>
            <person name="Karaffa L."/>
            <person name="Karanyi Z."/>
            <person name="Kato M."/>
            <person name="Keller N."/>
            <person name="Kelly D.E."/>
            <person name="Kiel J.A."/>
            <person name="Kim J.M."/>
            <person name="van der Klei I.J."/>
            <person name="Klis F.M."/>
            <person name="Kovalchuk A."/>
            <person name="Krasevec N."/>
            <person name="Kubicek C.P."/>
            <person name="Liu B."/>
            <person name="Maccabe A."/>
            <person name="Meyer V."/>
            <person name="Mirabito P."/>
            <person name="Miskei M."/>
            <person name="Mos M."/>
            <person name="Mullins J."/>
            <person name="Nelson D.R."/>
            <person name="Nielsen J."/>
            <person name="Oakley B.R."/>
            <person name="Osmani S.A."/>
            <person name="Pakula T."/>
            <person name="Paszewski A."/>
            <person name="Paulsen I."/>
            <person name="Pilsyk S."/>
            <person name="Pocsi I."/>
            <person name="Punt P.J."/>
            <person name="Ram A.F."/>
            <person name="Ren Q."/>
            <person name="Robellet X."/>
            <person name="Robson G."/>
            <person name="Seiboth B."/>
            <person name="van Solingen P."/>
            <person name="Specht T."/>
            <person name="Sun J."/>
            <person name="Taheri-Talesh N."/>
            <person name="Takeshita N."/>
            <person name="Ussery D."/>
            <person name="vanKuyk P.A."/>
            <person name="Visser H."/>
            <person name="van de Vondervoort P.J."/>
            <person name="de Vries R.P."/>
            <person name="Walton J."/>
            <person name="Xiang X."/>
            <person name="Xiong Y."/>
            <person name="Zeng A.P."/>
            <person name="Brandt B.W."/>
            <person name="Cornell M.J."/>
            <person name="van den Hondel C.A."/>
            <person name="Visser J."/>
            <person name="Oliver S.G."/>
            <person name="Turner G."/>
        </authorList>
    </citation>
    <scope>GENOME REANNOTATION</scope>
    <source>
        <strain>FGSC A4 / ATCC 38163 / CBS 112.46 / NRRL 194 / M139</strain>
    </source>
</reference>
<dbReference type="EMBL" id="DQ335590">
    <property type="protein sequence ID" value="ABC69304.1"/>
    <property type="molecule type" value="Genomic_DNA"/>
</dbReference>
<dbReference type="EMBL" id="AACD01000161">
    <property type="protein sequence ID" value="EAA60580.1"/>
    <property type="molecule type" value="Genomic_DNA"/>
</dbReference>
<dbReference type="EMBL" id="BN001303">
    <property type="protein sequence ID" value="CBF78020.1"/>
    <property type="molecule type" value="Genomic_DNA"/>
</dbReference>
<dbReference type="RefSeq" id="XP_682056.1">
    <property type="nucleotide sequence ID" value="XM_676964.1"/>
</dbReference>
<dbReference type="SMR" id="Q5ASE3"/>
<dbReference type="FunCoup" id="Q5ASE3">
    <property type="interactions" value="1015"/>
</dbReference>
<dbReference type="STRING" id="227321.Q5ASE3"/>
<dbReference type="EnsemblFungi" id="CBF78020">
    <property type="protein sequence ID" value="CBF78020"/>
    <property type="gene ID" value="ANIA_08787"/>
</dbReference>
<dbReference type="KEGG" id="ani:ANIA_08787"/>
<dbReference type="VEuPathDB" id="FungiDB:AN8787"/>
<dbReference type="eggNOG" id="KOG2021">
    <property type="taxonomic scope" value="Eukaryota"/>
</dbReference>
<dbReference type="HOGENOM" id="CLU_004414_0_1_1"/>
<dbReference type="InParanoid" id="Q5ASE3"/>
<dbReference type="OMA" id="HEMFLFG"/>
<dbReference type="OrthoDB" id="26399at2759"/>
<dbReference type="Proteomes" id="UP000000560">
    <property type="component" value="Chromosome III"/>
</dbReference>
<dbReference type="GO" id="GO:0005737">
    <property type="term" value="C:cytoplasm"/>
    <property type="evidence" value="ECO:0000318"/>
    <property type="project" value="GO_Central"/>
</dbReference>
<dbReference type="GO" id="GO:0016363">
    <property type="term" value="C:nuclear matrix"/>
    <property type="evidence" value="ECO:0000318"/>
    <property type="project" value="GO_Central"/>
</dbReference>
<dbReference type="GO" id="GO:0005643">
    <property type="term" value="C:nuclear pore"/>
    <property type="evidence" value="ECO:0000318"/>
    <property type="project" value="GO_Central"/>
</dbReference>
<dbReference type="GO" id="GO:0031267">
    <property type="term" value="F:small GTPase binding"/>
    <property type="evidence" value="ECO:0007669"/>
    <property type="project" value="InterPro"/>
</dbReference>
<dbReference type="GO" id="GO:0000049">
    <property type="term" value="F:tRNA binding"/>
    <property type="evidence" value="ECO:0000318"/>
    <property type="project" value="GO_Central"/>
</dbReference>
<dbReference type="GO" id="GO:0008033">
    <property type="term" value="P:tRNA processing"/>
    <property type="evidence" value="ECO:0007669"/>
    <property type="project" value="UniProtKB-KW"/>
</dbReference>
<dbReference type="GO" id="GO:0071528">
    <property type="term" value="P:tRNA re-export from nucleus"/>
    <property type="evidence" value="ECO:0000318"/>
    <property type="project" value="GO_Central"/>
</dbReference>
<dbReference type="FunFam" id="1.25.10.10:FF:000355">
    <property type="entry name" value="Exportin-T"/>
    <property type="match status" value="1"/>
</dbReference>
<dbReference type="Gene3D" id="1.25.10.10">
    <property type="entry name" value="Leucine-rich Repeat Variant"/>
    <property type="match status" value="1"/>
</dbReference>
<dbReference type="InterPro" id="IPR011989">
    <property type="entry name" value="ARM-like"/>
</dbReference>
<dbReference type="InterPro" id="IPR016024">
    <property type="entry name" value="ARM-type_fold"/>
</dbReference>
<dbReference type="InterPro" id="IPR013598">
    <property type="entry name" value="Exportin-1/Importin-b-like"/>
</dbReference>
<dbReference type="InterPro" id="IPR045546">
    <property type="entry name" value="Exportin-T_C"/>
</dbReference>
<dbReference type="InterPro" id="IPR040017">
    <property type="entry name" value="XPOT"/>
</dbReference>
<dbReference type="PANTHER" id="PTHR15952:SF11">
    <property type="entry name" value="EXPORTIN-T"/>
    <property type="match status" value="1"/>
</dbReference>
<dbReference type="PANTHER" id="PTHR15952">
    <property type="entry name" value="EXPORTIN-T/LOS1"/>
    <property type="match status" value="1"/>
</dbReference>
<dbReference type="Pfam" id="PF19282">
    <property type="entry name" value="Exportin-T"/>
    <property type="match status" value="1"/>
</dbReference>
<dbReference type="Pfam" id="PF08389">
    <property type="entry name" value="Xpo1"/>
    <property type="match status" value="1"/>
</dbReference>
<dbReference type="SUPFAM" id="SSF48371">
    <property type="entry name" value="ARM repeat"/>
    <property type="match status" value="1"/>
</dbReference>